<keyword id="KW-0067">ATP-binding</keyword>
<keyword id="KW-0963">Cytoplasm</keyword>
<keyword id="KW-0275">Fatty acid biosynthesis</keyword>
<keyword id="KW-0276">Fatty acid metabolism</keyword>
<keyword id="KW-0444">Lipid biosynthesis</keyword>
<keyword id="KW-0443">Lipid metabolism</keyword>
<keyword id="KW-0547">Nucleotide-binding</keyword>
<keyword id="KW-1185">Reference proteome</keyword>
<keyword id="KW-0808">Transferase</keyword>
<accession>A9BEF8</accession>
<proteinExistence type="inferred from homology"/>
<name>ACCA_PROM4</name>
<comment type="function">
    <text evidence="1">Component of the acetyl coenzyme A carboxylase (ACC) complex. First, biotin carboxylase catalyzes the carboxylation of biotin on its carrier protein (BCCP) and then the CO(2) group is transferred by the carboxyltransferase to acetyl-CoA to form malonyl-CoA.</text>
</comment>
<comment type="catalytic activity">
    <reaction evidence="1">
        <text>N(6)-carboxybiotinyl-L-lysyl-[protein] + acetyl-CoA = N(6)-biotinyl-L-lysyl-[protein] + malonyl-CoA</text>
        <dbReference type="Rhea" id="RHEA:54728"/>
        <dbReference type="Rhea" id="RHEA-COMP:10505"/>
        <dbReference type="Rhea" id="RHEA-COMP:10506"/>
        <dbReference type="ChEBI" id="CHEBI:57288"/>
        <dbReference type="ChEBI" id="CHEBI:57384"/>
        <dbReference type="ChEBI" id="CHEBI:83144"/>
        <dbReference type="ChEBI" id="CHEBI:83145"/>
        <dbReference type="EC" id="2.1.3.15"/>
    </reaction>
</comment>
<comment type="pathway">
    <text evidence="1">Lipid metabolism; malonyl-CoA biosynthesis; malonyl-CoA from acetyl-CoA: step 1/1.</text>
</comment>
<comment type="subunit">
    <text evidence="1">Acetyl-CoA carboxylase is a heterohexamer composed of biotin carboxyl carrier protein (AccB), biotin carboxylase (AccC) and two subunits each of ACCase subunit alpha (AccA) and ACCase subunit beta (AccD).</text>
</comment>
<comment type="subcellular location">
    <subcellularLocation>
        <location evidence="1">Cytoplasm</location>
    </subcellularLocation>
</comment>
<comment type="similarity">
    <text evidence="1">Belongs to the AccA family.</text>
</comment>
<protein>
    <recommendedName>
        <fullName evidence="1">Acetyl-coenzyme A carboxylase carboxyl transferase subunit alpha</fullName>
        <shortName evidence="1">ACCase subunit alpha</shortName>
        <shortName evidence="1">Acetyl-CoA carboxylase carboxyltransferase subunit alpha</shortName>
        <ecNumber evidence="1">2.1.3.15</ecNumber>
    </recommendedName>
</protein>
<organism>
    <name type="scientific">Prochlorococcus marinus (strain MIT 9211)</name>
    <dbReference type="NCBI Taxonomy" id="93059"/>
    <lineage>
        <taxon>Bacteria</taxon>
        <taxon>Bacillati</taxon>
        <taxon>Cyanobacteriota</taxon>
        <taxon>Cyanophyceae</taxon>
        <taxon>Synechococcales</taxon>
        <taxon>Prochlorococcaceae</taxon>
        <taxon>Prochlorococcus</taxon>
    </lineage>
</organism>
<gene>
    <name evidence="1" type="primary">accA</name>
    <name type="ordered locus">P9211_05371</name>
</gene>
<feature type="chain" id="PRO_1000134507" description="Acetyl-coenzyme A carboxylase carboxyl transferase subunit alpha">
    <location>
        <begin position="1"/>
        <end position="329"/>
    </location>
</feature>
<feature type="domain" description="CoA carboxyltransferase C-terminal" evidence="2">
    <location>
        <begin position="40"/>
        <end position="294"/>
    </location>
</feature>
<reference key="1">
    <citation type="journal article" date="2007" name="PLoS Genet.">
        <title>Patterns and implications of gene gain and loss in the evolution of Prochlorococcus.</title>
        <authorList>
            <person name="Kettler G.C."/>
            <person name="Martiny A.C."/>
            <person name="Huang K."/>
            <person name="Zucker J."/>
            <person name="Coleman M.L."/>
            <person name="Rodrigue S."/>
            <person name="Chen F."/>
            <person name="Lapidus A."/>
            <person name="Ferriera S."/>
            <person name="Johnson J."/>
            <person name="Steglich C."/>
            <person name="Church G.M."/>
            <person name="Richardson P."/>
            <person name="Chisholm S.W."/>
        </authorList>
    </citation>
    <scope>NUCLEOTIDE SEQUENCE [LARGE SCALE GENOMIC DNA]</scope>
    <source>
        <strain>MIT 9211</strain>
    </source>
</reference>
<evidence type="ECO:0000255" key="1">
    <source>
        <dbReference type="HAMAP-Rule" id="MF_00823"/>
    </source>
</evidence>
<evidence type="ECO:0000255" key="2">
    <source>
        <dbReference type="PROSITE-ProRule" id="PRU01137"/>
    </source>
</evidence>
<sequence>MARRYLLEFEKPLVELEKQIEQIRELARDSEVDVSQQLLQLETLAARRREEIFNALTPAQKIQVARHPQRPSTLDFIQMFCDDWVELHGDRNCSDDKALIGGIARIEEKSVLVIGQQKGRDTKENVARNFGMAKPGGYRKALRLMNHADRFKLPIISFIDTPGAYAGLLAEEQGQGEAIAVNLREMFRLRVPIISTVIGEGGSGGALGIGVADRLLMFEHSVYTVASPEACASILWRDAGKAPDAAAALKITGSDLMALGIVDEVLSEPSGGNNWAPLKAGEVLKESLIRNLRELDSLSIRQLRDKRYEKFRQMGRFLEPSSLDEELIT</sequence>
<dbReference type="EC" id="2.1.3.15" evidence="1"/>
<dbReference type="EMBL" id="CP000878">
    <property type="protein sequence ID" value="ABX08468.1"/>
    <property type="molecule type" value="Genomic_DNA"/>
</dbReference>
<dbReference type="RefSeq" id="WP_012195091.1">
    <property type="nucleotide sequence ID" value="NC_009976.1"/>
</dbReference>
<dbReference type="SMR" id="A9BEF8"/>
<dbReference type="STRING" id="93059.P9211_05371"/>
<dbReference type="KEGG" id="pmj:P9211_05371"/>
<dbReference type="eggNOG" id="COG0825">
    <property type="taxonomic scope" value="Bacteria"/>
</dbReference>
<dbReference type="HOGENOM" id="CLU_015486_0_2_3"/>
<dbReference type="OrthoDB" id="9808023at2"/>
<dbReference type="UniPathway" id="UPA00655">
    <property type="reaction ID" value="UER00711"/>
</dbReference>
<dbReference type="Proteomes" id="UP000000788">
    <property type="component" value="Chromosome"/>
</dbReference>
<dbReference type="GO" id="GO:0009317">
    <property type="term" value="C:acetyl-CoA carboxylase complex"/>
    <property type="evidence" value="ECO:0007669"/>
    <property type="project" value="InterPro"/>
</dbReference>
<dbReference type="GO" id="GO:0003989">
    <property type="term" value="F:acetyl-CoA carboxylase activity"/>
    <property type="evidence" value="ECO:0007669"/>
    <property type="project" value="InterPro"/>
</dbReference>
<dbReference type="GO" id="GO:0005524">
    <property type="term" value="F:ATP binding"/>
    <property type="evidence" value="ECO:0007669"/>
    <property type="project" value="UniProtKB-KW"/>
</dbReference>
<dbReference type="GO" id="GO:0016743">
    <property type="term" value="F:carboxyl- or carbamoyltransferase activity"/>
    <property type="evidence" value="ECO:0007669"/>
    <property type="project" value="UniProtKB-UniRule"/>
</dbReference>
<dbReference type="GO" id="GO:0006633">
    <property type="term" value="P:fatty acid biosynthetic process"/>
    <property type="evidence" value="ECO:0007669"/>
    <property type="project" value="UniProtKB-KW"/>
</dbReference>
<dbReference type="GO" id="GO:2001295">
    <property type="term" value="P:malonyl-CoA biosynthetic process"/>
    <property type="evidence" value="ECO:0007669"/>
    <property type="project" value="UniProtKB-UniRule"/>
</dbReference>
<dbReference type="Gene3D" id="3.90.226.10">
    <property type="entry name" value="2-enoyl-CoA Hydratase, Chain A, domain 1"/>
    <property type="match status" value="1"/>
</dbReference>
<dbReference type="HAMAP" id="MF_00823">
    <property type="entry name" value="AcetylCoA_CT_alpha"/>
    <property type="match status" value="1"/>
</dbReference>
<dbReference type="InterPro" id="IPR001095">
    <property type="entry name" value="Acetyl_CoA_COase_a_su"/>
</dbReference>
<dbReference type="InterPro" id="IPR029045">
    <property type="entry name" value="ClpP/crotonase-like_dom_sf"/>
</dbReference>
<dbReference type="InterPro" id="IPR011763">
    <property type="entry name" value="COA_CT_C"/>
</dbReference>
<dbReference type="NCBIfam" id="TIGR00513">
    <property type="entry name" value="accA"/>
    <property type="match status" value="1"/>
</dbReference>
<dbReference type="NCBIfam" id="NF041504">
    <property type="entry name" value="AccA_sub"/>
    <property type="match status" value="1"/>
</dbReference>
<dbReference type="NCBIfam" id="NF004344">
    <property type="entry name" value="PRK05724.1"/>
    <property type="match status" value="1"/>
</dbReference>
<dbReference type="PANTHER" id="PTHR42853">
    <property type="entry name" value="ACETYL-COENZYME A CARBOXYLASE CARBOXYL TRANSFERASE SUBUNIT ALPHA"/>
    <property type="match status" value="1"/>
</dbReference>
<dbReference type="PANTHER" id="PTHR42853:SF3">
    <property type="entry name" value="ACETYL-COENZYME A CARBOXYLASE CARBOXYL TRANSFERASE SUBUNIT ALPHA, CHLOROPLASTIC"/>
    <property type="match status" value="1"/>
</dbReference>
<dbReference type="Pfam" id="PF03255">
    <property type="entry name" value="ACCA"/>
    <property type="match status" value="1"/>
</dbReference>
<dbReference type="PRINTS" id="PR01069">
    <property type="entry name" value="ACCCTRFRASEA"/>
</dbReference>
<dbReference type="SUPFAM" id="SSF52096">
    <property type="entry name" value="ClpP/crotonase"/>
    <property type="match status" value="1"/>
</dbReference>
<dbReference type="PROSITE" id="PS50989">
    <property type="entry name" value="COA_CT_CTER"/>
    <property type="match status" value="1"/>
</dbReference>